<name>GSP_SHIFL</name>
<comment type="function">
    <text evidence="2">Catalyzes the formation of an amide bond between glutathione (GSH) and spermidine coupled with hydrolysis of ATP; also catalyzes the opposing reaction, i.e. the hydrolysis of glutathionylspermidine (Gsp) back to glutathione and spermidine. May act synergistically with glutaredoxin to regulate the redox environment and defend against oxidative damage.</text>
</comment>
<comment type="catalytic activity">
    <reaction evidence="2">
        <text>spermidine + glutathione + ATP = glutathionylspermidine + ADP + phosphate + H(+)</text>
        <dbReference type="Rhea" id="RHEA:21272"/>
        <dbReference type="ChEBI" id="CHEBI:15378"/>
        <dbReference type="ChEBI" id="CHEBI:30616"/>
        <dbReference type="ChEBI" id="CHEBI:43474"/>
        <dbReference type="ChEBI" id="CHEBI:57834"/>
        <dbReference type="ChEBI" id="CHEBI:57835"/>
        <dbReference type="ChEBI" id="CHEBI:57925"/>
        <dbReference type="ChEBI" id="CHEBI:456216"/>
        <dbReference type="EC" id="6.3.1.8"/>
    </reaction>
</comment>
<comment type="catalytic activity">
    <reaction evidence="2">
        <text>glutathionylspermidine + H2O = spermidine + glutathione</text>
        <dbReference type="Rhea" id="RHEA:17173"/>
        <dbReference type="ChEBI" id="CHEBI:15377"/>
        <dbReference type="ChEBI" id="CHEBI:57834"/>
        <dbReference type="ChEBI" id="CHEBI:57835"/>
        <dbReference type="ChEBI" id="CHEBI:57925"/>
        <dbReference type="EC" id="3.5.1.78"/>
    </reaction>
</comment>
<comment type="activity regulation">
    <text evidence="2">When exposed to oxidative stress, Gsp amidase activity is transiently inhibited in vivo by oxidation of the catalytic Cys-59 thiol to sulfenic acid; this modification does not affect Gsp synthetase activity.</text>
</comment>
<comment type="pathway">
    <text>Sulfur metabolism; glutathione metabolism.</text>
</comment>
<comment type="pathway">
    <text>Amine and polyamine metabolism; spermidine metabolism.</text>
</comment>
<comment type="subunit">
    <text evidence="2">Homodimer.</text>
</comment>
<comment type="domain">
    <text evidence="1">The two activities reside in distinct domains (N-terminal amidase and C-terminal synthetase). The two domains expressed independently are folded and functional (By similarity).</text>
</comment>
<comment type="PTM">
    <text evidence="2">Oxidation of Cys-59 to sulfenic acid during oxidative stress selectively inhibits the amidase activity.</text>
</comment>
<comment type="similarity">
    <text evidence="4">In the C-terminal section; belongs to the glutathionylspermidine synthase preATP-grasp family.</text>
</comment>
<reference key="1">
    <citation type="journal article" date="2002" name="Nucleic Acids Res.">
        <title>Genome sequence of Shigella flexneri 2a: insights into pathogenicity through comparison with genomes of Escherichia coli K12 and O157.</title>
        <authorList>
            <person name="Jin Q."/>
            <person name="Yuan Z."/>
            <person name="Xu J."/>
            <person name="Wang Y."/>
            <person name="Shen Y."/>
            <person name="Lu W."/>
            <person name="Wang J."/>
            <person name="Liu H."/>
            <person name="Yang J."/>
            <person name="Yang F."/>
            <person name="Zhang X."/>
            <person name="Zhang J."/>
            <person name="Yang G."/>
            <person name="Wu H."/>
            <person name="Qu D."/>
            <person name="Dong J."/>
            <person name="Sun L."/>
            <person name="Xue Y."/>
            <person name="Zhao A."/>
            <person name="Gao Y."/>
            <person name="Zhu J."/>
            <person name="Kan B."/>
            <person name="Ding K."/>
            <person name="Chen S."/>
            <person name="Cheng H."/>
            <person name="Yao Z."/>
            <person name="He B."/>
            <person name="Chen R."/>
            <person name="Ma D."/>
            <person name="Qiang B."/>
            <person name="Wen Y."/>
            <person name="Hou Y."/>
            <person name="Yu J."/>
        </authorList>
    </citation>
    <scope>NUCLEOTIDE SEQUENCE [LARGE SCALE GENOMIC DNA]</scope>
    <source>
        <strain>301 / Serotype 2a</strain>
    </source>
</reference>
<reference key="2">
    <citation type="journal article" date="2003" name="Infect. Immun.">
        <title>Complete genome sequence and comparative genomics of Shigella flexneri serotype 2a strain 2457T.</title>
        <authorList>
            <person name="Wei J."/>
            <person name="Goldberg M.B."/>
            <person name="Burland V."/>
            <person name="Venkatesan M.M."/>
            <person name="Deng W."/>
            <person name="Fournier G."/>
            <person name="Mayhew G.F."/>
            <person name="Plunkett G. III"/>
            <person name="Rose D.J."/>
            <person name="Darling A."/>
            <person name="Mau B."/>
            <person name="Perna N.T."/>
            <person name="Payne S.M."/>
            <person name="Runyen-Janecky L.J."/>
            <person name="Zhou S."/>
            <person name="Schwartz D.C."/>
            <person name="Blattner F.R."/>
        </authorList>
    </citation>
    <scope>NUCLEOTIDE SEQUENCE [LARGE SCALE GENOMIC DNA]</scope>
    <source>
        <strain>ATCC 700930 / 2457T / Serotype 2a</strain>
    </source>
</reference>
<keyword id="KW-0067">ATP-binding</keyword>
<keyword id="KW-0378">Hydrolase</keyword>
<keyword id="KW-0436">Ligase</keyword>
<keyword id="KW-0460">Magnesium</keyword>
<keyword id="KW-0479">Metal-binding</keyword>
<keyword id="KW-0511">Multifunctional enzyme</keyword>
<keyword id="KW-0547">Nucleotide-binding</keyword>
<keyword id="KW-0558">Oxidation</keyword>
<keyword id="KW-1185">Reference proteome</keyword>
<sequence length="619" mass="70532">MSKGTTSQDAPFGTLLGYAPGGVAIYSSDYSSLDPQEYEDDAVFRSYIDDEYMGHKWQCVEFARRFLFLNYGVVFTDVGMAWEIFSLRFLREVVNDNILPLQAFPNGSPRAPVAGALLIWDKGGEFKDTGHVAIITQLHGNKVRIAEQNVIHSPLPQGQQWTRELEMVVENGCYTLKDTFDDTTILGWMIQTEDTEYSLPQPEIAGELLKISGARLENKGQFDGKWLDEKDPLQNAYVQANGQVINQDPYHYYTITESAEQELIKATNELHLMYLHATDKVLKDDNLLALFDIPKILWPRLRLSWQRRRHHMITGRMDFCMDERGLKVYEYNADSASCHTEAGLILERWAEQGYKGNGFNPAEGLINELAGAWKHSRARPFVHIMQDKDIEENYHAQFMEQALHQAGFETRILRGLDELGWDAAGQLIDGEGRLVNCVWKTWAWETAFDQIREVSDREFAAVPIRTGHPQNEVRLIDVLLRPEVLVFEPLWTVIPGNKAILPILWSLFPHHRYLLDTDFTVNDELVKTGYAVKPIAGRCGSNIDLVSHHEEVLDKTSGKFAEQKNIYQQLWCLPKVDGKYIQVCTFTVGGNYGGTCLRGDESLVIKKESDIEPLIVVKK</sequence>
<feature type="initiator methionine" description="Removed" evidence="1">
    <location>
        <position position="1"/>
    </location>
</feature>
<feature type="chain" id="PRO_0000070444" description="Bifunctional glutathionylspermidine synthetase/amidase">
    <location>
        <begin position="2"/>
        <end position="619"/>
    </location>
</feature>
<feature type="domain" description="Peptidase C51" evidence="3">
    <location>
        <begin position="34"/>
        <end position="176"/>
    </location>
</feature>
<feature type="region of interest" description="Gsp amidase">
    <location>
        <begin position="2"/>
        <end position="195"/>
    </location>
</feature>
<feature type="region of interest" description="Linker">
    <location>
        <begin position="196"/>
        <end position="205"/>
    </location>
</feature>
<feature type="region of interest" description="Gsp synthetase">
    <location>
        <begin position="206"/>
        <end position="619"/>
    </location>
</feature>
<feature type="active site" description="S-(gamma-glutamyl-cysteinyl-glycyl)-cysteine intermediate" evidence="1">
    <location>
        <position position="59"/>
    </location>
</feature>
<feature type="binding site" evidence="1">
    <location>
        <position position="58"/>
    </location>
    <ligand>
        <name>glutathionylspermidine</name>
        <dbReference type="ChEBI" id="CHEBI:57835"/>
    </ligand>
</feature>
<feature type="binding site" evidence="1">
    <location>
        <position position="64"/>
    </location>
    <ligand>
        <name>glutathionylspermidine</name>
        <dbReference type="ChEBI" id="CHEBI:57835"/>
    </ligand>
</feature>
<feature type="binding site" evidence="1">
    <location>
        <begin position="78"/>
        <end position="81"/>
    </location>
    <ligand>
        <name>glutathionylspermidine</name>
        <dbReference type="ChEBI" id="CHEBI:57835"/>
    </ligand>
</feature>
<feature type="binding site" evidence="1">
    <location>
        <position position="149"/>
    </location>
    <ligand>
        <name>glutathionylspermidine</name>
        <dbReference type="ChEBI" id="CHEBI:57835"/>
    </ligand>
</feature>
<feature type="binding site" evidence="1">
    <location>
        <begin position="316"/>
        <end position="318"/>
    </location>
    <ligand>
        <name>ATP</name>
        <dbReference type="ChEBI" id="CHEBI:30616"/>
    </ligand>
</feature>
<feature type="binding site" evidence="1">
    <location>
        <position position="316"/>
    </location>
    <ligand>
        <name>glutathione</name>
        <dbReference type="ChEBI" id="CHEBI:57925"/>
    </ligand>
</feature>
<feature type="binding site" evidence="1">
    <location>
        <position position="318"/>
    </location>
    <ligand>
        <name>Mg(2+)</name>
        <dbReference type="ChEBI" id="CHEBI:18420"/>
        <label>1</label>
    </ligand>
</feature>
<feature type="binding site" evidence="1">
    <location>
        <position position="330"/>
    </location>
    <ligand>
        <name>Mg(2+)</name>
        <dbReference type="ChEBI" id="CHEBI:18420"/>
        <label>1</label>
    </ligand>
</feature>
<feature type="binding site" evidence="1">
    <location>
        <position position="330"/>
    </location>
    <ligand>
        <name>Mg(2+)</name>
        <dbReference type="ChEBI" id="CHEBI:18420"/>
        <label>2</label>
    </ligand>
</feature>
<feature type="binding site" evidence="1">
    <location>
        <position position="332"/>
    </location>
    <ligand>
        <name>Mg(2+)</name>
        <dbReference type="ChEBI" id="CHEBI:18420"/>
        <label>2</label>
    </ligand>
</feature>
<feature type="binding site" evidence="1">
    <location>
        <position position="335"/>
    </location>
    <ligand>
        <name>glutathione</name>
        <dbReference type="ChEBI" id="CHEBI:57925"/>
    </ligand>
</feature>
<feature type="binding site" evidence="1">
    <location>
        <position position="391"/>
    </location>
    <ligand>
        <name>spermidine</name>
        <dbReference type="ChEBI" id="CHEBI:57834"/>
    </ligand>
</feature>
<feature type="binding site" evidence="1">
    <location>
        <position position="392"/>
    </location>
    <ligand>
        <name>glutathione</name>
        <dbReference type="ChEBI" id="CHEBI:57925"/>
    </ligand>
</feature>
<feature type="binding site" evidence="1">
    <location>
        <position position="446"/>
    </location>
    <ligand>
        <name>glutathione</name>
        <dbReference type="ChEBI" id="CHEBI:57925"/>
    </ligand>
</feature>
<feature type="binding site" evidence="1">
    <location>
        <position position="498"/>
    </location>
    <ligand>
        <name>ATP</name>
        <dbReference type="ChEBI" id="CHEBI:30616"/>
    </ligand>
</feature>
<feature type="binding site" evidence="1">
    <location>
        <position position="533"/>
    </location>
    <ligand>
        <name>ATP</name>
        <dbReference type="ChEBI" id="CHEBI:30616"/>
    </ligand>
</feature>
<feature type="binding site" evidence="1">
    <location>
        <begin position="539"/>
        <end position="540"/>
    </location>
    <ligand>
        <name>ATP</name>
        <dbReference type="ChEBI" id="CHEBI:30616"/>
    </ligand>
</feature>
<feature type="binding site" evidence="1">
    <location>
        <begin position="568"/>
        <end position="571"/>
    </location>
    <ligand>
        <name>ATP</name>
        <dbReference type="ChEBI" id="CHEBI:30616"/>
    </ligand>
</feature>
<feature type="binding site" evidence="1">
    <location>
        <position position="582"/>
    </location>
    <ligand>
        <name>ATP</name>
        <dbReference type="ChEBI" id="CHEBI:30616"/>
    </ligand>
</feature>
<feature type="binding site" evidence="1">
    <location>
        <begin position="603"/>
        <end position="605"/>
    </location>
    <ligand>
        <name>ATP</name>
        <dbReference type="ChEBI" id="CHEBI:30616"/>
    </ligand>
</feature>
<feature type="binding site" evidence="1">
    <location>
        <position position="610"/>
    </location>
    <ligand>
        <name>spermidine</name>
        <dbReference type="ChEBI" id="CHEBI:57834"/>
    </ligand>
</feature>
<feature type="site" description="Increases nucleophilicity of active site Cys; for amidase activity" evidence="1">
    <location>
        <position position="131"/>
    </location>
</feature>
<feature type="site" description="Transition state stabilizer; for synthetase activity" evidence="1">
    <location>
        <position position="316"/>
    </location>
</feature>
<feature type="modified residue" description="Cysteine sulfenic acid (-SOH); transient" evidence="1">
    <location>
        <position position="59"/>
    </location>
</feature>
<dbReference type="EC" id="3.5.1.78" evidence="2"/>
<dbReference type="EC" id="6.3.1.8" evidence="2"/>
<dbReference type="EMBL" id="AE005674">
    <property type="protein sequence ID" value="AAN44513.2"/>
    <property type="molecule type" value="Genomic_DNA"/>
</dbReference>
<dbReference type="EMBL" id="AE014073">
    <property type="protein sequence ID" value="AAP18324.1"/>
    <property type="molecule type" value="Genomic_DNA"/>
</dbReference>
<dbReference type="RefSeq" id="NP_708806.2">
    <property type="nucleotide sequence ID" value="NC_004337.2"/>
</dbReference>
<dbReference type="RefSeq" id="WP_001297309.1">
    <property type="nucleotide sequence ID" value="NZ_WPGW01000034.1"/>
</dbReference>
<dbReference type="SMR" id="P0AES1"/>
<dbReference type="STRING" id="198214.SF3035"/>
<dbReference type="PaxDb" id="198214-SF3035"/>
<dbReference type="GeneID" id="1026646"/>
<dbReference type="GeneID" id="93778997"/>
<dbReference type="KEGG" id="sfl:SF3035"/>
<dbReference type="KEGG" id="sfx:S3236"/>
<dbReference type="PATRIC" id="fig|198214.7.peg.3609"/>
<dbReference type="HOGENOM" id="CLU_478805_0_0_6"/>
<dbReference type="UniPathway" id="UPA00204"/>
<dbReference type="UniPathway" id="UPA00819"/>
<dbReference type="Proteomes" id="UP000001006">
    <property type="component" value="Chromosome"/>
</dbReference>
<dbReference type="Proteomes" id="UP000002673">
    <property type="component" value="Chromosome"/>
</dbReference>
<dbReference type="GO" id="GO:0005524">
    <property type="term" value="F:ATP binding"/>
    <property type="evidence" value="ECO:0007669"/>
    <property type="project" value="UniProtKB-KW"/>
</dbReference>
<dbReference type="GO" id="GO:0008884">
    <property type="term" value="F:glutathionylspermidine amidase activity"/>
    <property type="evidence" value="ECO:0007669"/>
    <property type="project" value="UniProtKB-EC"/>
</dbReference>
<dbReference type="GO" id="GO:0008885">
    <property type="term" value="F:glutathionylspermidine synthase activity"/>
    <property type="evidence" value="ECO:0007669"/>
    <property type="project" value="UniProtKB-EC"/>
</dbReference>
<dbReference type="GO" id="GO:0046872">
    <property type="term" value="F:metal ion binding"/>
    <property type="evidence" value="ECO:0007669"/>
    <property type="project" value="UniProtKB-KW"/>
</dbReference>
<dbReference type="GO" id="GO:0006749">
    <property type="term" value="P:glutathione metabolic process"/>
    <property type="evidence" value="ECO:0007669"/>
    <property type="project" value="UniProtKB-UniPathway"/>
</dbReference>
<dbReference type="GO" id="GO:0008216">
    <property type="term" value="P:spermidine metabolic process"/>
    <property type="evidence" value="ECO:0007669"/>
    <property type="project" value="UniProtKB-UniPathway"/>
</dbReference>
<dbReference type="FunFam" id="3.30.1490.330:FF:000001">
    <property type="entry name" value="Bifunctional glutathionylspermidine synthetase/amidase"/>
    <property type="match status" value="1"/>
</dbReference>
<dbReference type="FunFam" id="3.90.1720.10:FF:000004">
    <property type="entry name" value="Bifunctional glutathionylspermidine synthetase/amidase"/>
    <property type="match status" value="1"/>
</dbReference>
<dbReference type="Gene3D" id="3.30.1490.330">
    <property type="match status" value="1"/>
</dbReference>
<dbReference type="Gene3D" id="3.90.1720.10">
    <property type="entry name" value="endopeptidase domain like (from Nostoc punctiforme)"/>
    <property type="match status" value="1"/>
</dbReference>
<dbReference type="InterPro" id="IPR007921">
    <property type="entry name" value="CHAP_dom"/>
</dbReference>
<dbReference type="InterPro" id="IPR051705">
    <property type="entry name" value="Gsp_Synthetase/Amidase"/>
</dbReference>
<dbReference type="InterPro" id="IPR005494">
    <property type="entry name" value="GSPS_pre-ATP-grasp-like_dom"/>
</dbReference>
<dbReference type="InterPro" id="IPR038765">
    <property type="entry name" value="Papain-like_cys_pep_sf"/>
</dbReference>
<dbReference type="InterPro" id="IPR016185">
    <property type="entry name" value="PreATP-grasp_dom_sf"/>
</dbReference>
<dbReference type="NCBIfam" id="NF007801">
    <property type="entry name" value="PRK10507.1"/>
    <property type="match status" value="1"/>
</dbReference>
<dbReference type="PANTHER" id="PTHR30094">
    <property type="entry name" value="BIFUNCTIONAL GLUTATHIONYLSPERMIDINE SYNTHETASE/AMIDASE-RELATED"/>
    <property type="match status" value="1"/>
</dbReference>
<dbReference type="PANTHER" id="PTHR30094:SF0">
    <property type="entry name" value="BIFUNCTIONAL GLUTATHIONYLSPERMIDINE SYNTHETASE_AMIDASE-RELATED"/>
    <property type="match status" value="1"/>
</dbReference>
<dbReference type="Pfam" id="PF05257">
    <property type="entry name" value="CHAP"/>
    <property type="match status" value="1"/>
</dbReference>
<dbReference type="Pfam" id="PF03738">
    <property type="entry name" value="GSP_synth"/>
    <property type="match status" value="1"/>
</dbReference>
<dbReference type="SUPFAM" id="SSF54001">
    <property type="entry name" value="Cysteine proteinases"/>
    <property type="match status" value="1"/>
</dbReference>
<dbReference type="SUPFAM" id="SSF56059">
    <property type="entry name" value="Glutathione synthetase ATP-binding domain-like"/>
    <property type="match status" value="1"/>
</dbReference>
<dbReference type="SUPFAM" id="SSF52440">
    <property type="entry name" value="PreATP-grasp domain"/>
    <property type="match status" value="1"/>
</dbReference>
<dbReference type="PROSITE" id="PS50911">
    <property type="entry name" value="CHAP"/>
    <property type="match status" value="1"/>
</dbReference>
<organism>
    <name type="scientific">Shigella flexneri</name>
    <dbReference type="NCBI Taxonomy" id="623"/>
    <lineage>
        <taxon>Bacteria</taxon>
        <taxon>Pseudomonadati</taxon>
        <taxon>Pseudomonadota</taxon>
        <taxon>Gammaproteobacteria</taxon>
        <taxon>Enterobacterales</taxon>
        <taxon>Enterobacteriaceae</taxon>
        <taxon>Shigella</taxon>
    </lineage>
</organism>
<gene>
    <name type="primary">gss</name>
    <name type="synonym">gsp</name>
    <name type="ordered locus">SF3035</name>
    <name type="ordered locus">S3236</name>
</gene>
<proteinExistence type="inferred from homology"/>
<protein>
    <recommendedName>
        <fullName>Bifunctional glutathionylspermidine synthetase/amidase</fullName>
        <shortName>GspSA</shortName>
    </recommendedName>
    <domain>
        <recommendedName>
            <fullName>Glutathionylspermidine amidase</fullName>
            <shortName>Gsp amidase</shortName>
            <ecNumber evidence="2">3.5.1.78</ecNumber>
        </recommendedName>
        <alternativeName>
            <fullName>Glutathionylspermidine amidohydrolase [spermidine-forming]</fullName>
        </alternativeName>
    </domain>
    <domain>
        <recommendedName>
            <fullName>Glutathionylspermidine synthetase</fullName>
            <shortName>Gsp synthetase</shortName>
            <ecNumber evidence="2">6.3.1.8</ecNumber>
        </recommendedName>
        <alternativeName>
            <fullName>Glutathione:spermidine ligase [ADP-forming]</fullName>
        </alternativeName>
        <alternativeName>
            <fullName>Gsp synthase</fullName>
        </alternativeName>
    </domain>
</protein>
<evidence type="ECO:0000250" key="1"/>
<evidence type="ECO:0000250" key="2">
    <source>
        <dbReference type="UniProtKB" id="P0AES0"/>
    </source>
</evidence>
<evidence type="ECO:0000255" key="3">
    <source>
        <dbReference type="PROSITE-ProRule" id="PRU00048"/>
    </source>
</evidence>
<evidence type="ECO:0000305" key="4"/>
<accession>P0AES1</accession>
<accession>P43675</accession>